<name>IOVO_PTEAF</name>
<evidence type="ECO:0000255" key="1">
    <source>
        <dbReference type="PROSITE-ProRule" id="PRU00798"/>
    </source>
</evidence>
<organism>
    <name type="scientific">Pternistis afer</name>
    <name type="common">Red-necked francolin</name>
    <name type="synonym">Francolinus afer</name>
    <dbReference type="NCBI Taxonomy" id="9020"/>
    <lineage>
        <taxon>Eukaryota</taxon>
        <taxon>Metazoa</taxon>
        <taxon>Chordata</taxon>
        <taxon>Craniata</taxon>
        <taxon>Vertebrata</taxon>
        <taxon>Euteleostomi</taxon>
        <taxon>Archelosauria</taxon>
        <taxon>Archosauria</taxon>
        <taxon>Dinosauria</taxon>
        <taxon>Saurischia</taxon>
        <taxon>Theropoda</taxon>
        <taxon>Coelurosauria</taxon>
        <taxon>Aves</taxon>
        <taxon>Neognathae</taxon>
        <taxon>Galloanserae</taxon>
        <taxon>Galliformes</taxon>
        <taxon>Phasianidae</taxon>
        <taxon>Perdicinae</taxon>
        <taxon>Pternistis</taxon>
    </lineage>
</organism>
<protein>
    <recommendedName>
        <fullName>Ovomucoid</fullName>
    </recommendedName>
</protein>
<dbReference type="PIR" id="A31437">
    <property type="entry name" value="A31437"/>
</dbReference>
<dbReference type="SMR" id="P05594"/>
<dbReference type="GO" id="GO:0005576">
    <property type="term" value="C:extracellular region"/>
    <property type="evidence" value="ECO:0007669"/>
    <property type="project" value="UniProtKB-SubCell"/>
</dbReference>
<dbReference type="GO" id="GO:0004867">
    <property type="term" value="F:serine-type endopeptidase inhibitor activity"/>
    <property type="evidence" value="ECO:0007669"/>
    <property type="project" value="UniProtKB-KW"/>
</dbReference>
<dbReference type="CDD" id="cd00104">
    <property type="entry name" value="KAZAL_FS"/>
    <property type="match status" value="1"/>
</dbReference>
<dbReference type="FunFam" id="3.30.60.30:FF:000037">
    <property type="entry name" value="Ovomucoid"/>
    <property type="match status" value="1"/>
</dbReference>
<dbReference type="Gene3D" id="3.30.60.30">
    <property type="match status" value="1"/>
</dbReference>
<dbReference type="InterPro" id="IPR051597">
    <property type="entry name" value="Bifunctional_prot_inhibitor"/>
</dbReference>
<dbReference type="InterPro" id="IPR002350">
    <property type="entry name" value="Kazal_dom"/>
</dbReference>
<dbReference type="InterPro" id="IPR036058">
    <property type="entry name" value="Kazal_dom_sf"/>
</dbReference>
<dbReference type="InterPro" id="IPR001239">
    <property type="entry name" value="Prot_inh_Kazal-m"/>
</dbReference>
<dbReference type="PANTHER" id="PTHR47729:SF1">
    <property type="entry name" value="OVOMUCOID-LIKE-RELATED"/>
    <property type="match status" value="1"/>
</dbReference>
<dbReference type="PANTHER" id="PTHR47729">
    <property type="entry name" value="SERINE PEPTIDASE INHIBITOR, KAZAL TYPE 2, TANDEM DUPLICATE 1-RELATED"/>
    <property type="match status" value="1"/>
</dbReference>
<dbReference type="Pfam" id="PF00050">
    <property type="entry name" value="Kazal_1"/>
    <property type="match status" value="1"/>
</dbReference>
<dbReference type="PRINTS" id="PR00290">
    <property type="entry name" value="KAZALINHBTR"/>
</dbReference>
<dbReference type="SMART" id="SM00280">
    <property type="entry name" value="KAZAL"/>
    <property type="match status" value="1"/>
</dbReference>
<dbReference type="SUPFAM" id="SSF100895">
    <property type="entry name" value="Kazal-type serine protease inhibitors"/>
    <property type="match status" value="1"/>
</dbReference>
<dbReference type="PROSITE" id="PS00282">
    <property type="entry name" value="KAZAL_1"/>
    <property type="match status" value="1"/>
</dbReference>
<dbReference type="PROSITE" id="PS51465">
    <property type="entry name" value="KAZAL_2"/>
    <property type="match status" value="1"/>
</dbReference>
<accession>P05594</accession>
<keyword id="KW-0903">Direct protein sequencing</keyword>
<keyword id="KW-1015">Disulfide bond</keyword>
<keyword id="KW-0325">Glycoprotein</keyword>
<keyword id="KW-0646">Protease inhibitor</keyword>
<keyword id="KW-0677">Repeat</keyword>
<keyword id="KW-0964">Secreted</keyword>
<keyword id="KW-0722">Serine protease inhibitor</keyword>
<comment type="subcellular location">
    <subcellularLocation>
        <location>Secreted</location>
    </subcellularLocation>
</comment>
<comment type="domain">
    <text>Avian ovomucoid consists of three homologous, tandem Kazal family inhibitory domains.</text>
</comment>
<proteinExistence type="evidence at protein level"/>
<reference key="1">
    <citation type="journal article" date="1987" name="Biochemistry">
        <title>Ovomucoid third domains from 100 avian species: isolation, sequences, and hypervariability of enzyme-inhibitor contact residues.</title>
        <authorList>
            <person name="Laskowski M. Jr."/>
            <person name="Kato I."/>
            <person name="Ardelt W."/>
            <person name="Cook J."/>
            <person name="Denton A."/>
            <person name="Empie M.W."/>
            <person name="Kohr W.J."/>
            <person name="Park S.J."/>
            <person name="Parks K."/>
            <person name="Schatzley B.L."/>
            <person name="Schoenberger O.L."/>
            <person name="Tashiro M."/>
            <person name="Vichot G."/>
            <person name="Whatley H.E."/>
            <person name="Wieczorek A."/>
            <person name="Wieczorek M."/>
        </authorList>
    </citation>
    <scope>PROTEIN SEQUENCE</scope>
</reference>
<feature type="chain" id="PRO_0000073108" description="Ovomucoid">
    <location>
        <begin position="1" status="less than"/>
        <end position="53" status="greater than"/>
    </location>
</feature>
<feature type="domain" description="Kazal-like" evidence="1">
    <location>
        <begin position="3"/>
        <end position="53"/>
    </location>
</feature>
<feature type="site" description="Reactive bond 3">
    <location>
        <begin position="15"/>
        <end position="16"/>
    </location>
</feature>
<feature type="glycosylation site" description="N-linked (GlcNAc...) asparagine">
    <location>
        <position position="42"/>
    </location>
</feature>
<feature type="disulfide bond">
    <location>
        <begin position="5"/>
        <end position="35"/>
    </location>
</feature>
<feature type="disulfide bond">
    <location>
        <begin position="13"/>
        <end position="32"/>
    </location>
</feature>
<feature type="disulfide bond">
    <location>
        <begin position="21"/>
        <end position="53"/>
    </location>
</feature>
<feature type="non-terminal residue">
    <location>
        <position position="1"/>
    </location>
</feature>
<feature type="non-terminal residue">
    <location>
        <position position="53"/>
    </location>
</feature>
<sequence>VSVDCSEYPKPACTMEYRPVCGSDNITYGNKCNFCNAVVKSNGTLTLSHFGKC</sequence>